<proteinExistence type="inferred from homology"/>
<reference key="1">
    <citation type="journal article" date="2013" name="Genome Announc.">
        <title>Draft genome sequence of MKD8, a conjugal recipient Mycobacterium smegmatis strain.</title>
        <authorList>
            <person name="Gray T.A."/>
            <person name="Palumbo M.J."/>
            <person name="Derbyshire K.M."/>
        </authorList>
    </citation>
    <scope>NUCLEOTIDE SEQUENCE [LARGE SCALE GENOMIC DNA]</scope>
    <source>
        <strain>MKD8</strain>
    </source>
</reference>
<reference key="2">
    <citation type="submission" date="2018-03" db="EMBL/GenBank/DDBJ databases">
        <authorList>
            <person name="Derbyshire K."/>
            <person name="Gray T.A."/>
            <person name="Champion M."/>
        </authorList>
    </citation>
    <scope>NUCLEOTIDE SEQUENCE [LARGE SCALE GENOMIC DNA]</scope>
    <source>
        <strain>MKD8</strain>
    </source>
</reference>
<reference key="3">
    <citation type="journal article" date="2008" name="Mol. Microbiol.">
        <title>The specialized secretory apparatus ESX-1 is essential for DNA transfer in Mycobacterium smegmatis.</title>
        <authorList>
            <person name="Coros A."/>
            <person name="Callahan B."/>
            <person name="Battaglioli E."/>
            <person name="Derbyshire K.M."/>
        </authorList>
    </citation>
    <scope>FUNCTION</scope>
    <scope>DISRUPTION PHENOTYPE</scope>
    <source>
        <strain>MKD8</strain>
    </source>
</reference>
<comment type="function">
    <text evidence="3">Involved in DNA conjugation, at least in the recipient strain (PubMed:18554329).</text>
</comment>
<comment type="subcellular location">
    <subcellularLocation>
        <location evidence="1">Secreted</location>
    </subcellularLocation>
    <text evidence="1">Secreted via the ESX-1 / type VII secretion system (T7SS) (By similarity).</text>
</comment>
<comment type="disruption phenotype">
    <text evidence="3">Loss of DNA conjugation when disrupted in recipient strain; strain still secretes EsxB (PubMed:18554329).</text>
</comment>
<comment type="miscellaneous">
    <text evidence="6">DNA conjugation in M.smegmatis is unidirectional with distinct donor and recipient strains; mc(2)155 is a donor strain while MKD8 is a recipient strain. Mutations in a donor strain that alter DNA transfer do not always alter DNA transfer in a recipient strain.</text>
</comment>
<comment type="similarity">
    <text evidence="5">Belongs to the EspB family.</text>
</comment>
<name>ESPB_MYCSE</name>
<accession>L8FKX3</accession>
<accession>A0A2U9PH63</accession>
<organism>
    <name type="scientific">Mycolicibacterium smegmatis (strain MKD8)</name>
    <name type="common">Mycobacterium smegmatis</name>
    <dbReference type="NCBI Taxonomy" id="1214915"/>
    <lineage>
        <taxon>Bacteria</taxon>
        <taxon>Bacillati</taxon>
        <taxon>Actinomycetota</taxon>
        <taxon>Actinomycetes</taxon>
        <taxon>Mycobacteriales</taxon>
        <taxon>Mycobacteriaceae</taxon>
        <taxon>Mycolicibacterium</taxon>
    </lineage>
</organism>
<gene>
    <name evidence="5" type="primary">espB</name>
    <name evidence="4" type="ORF">0076R</name>
    <name evidence="7" type="ORF">D806_000800</name>
    <name type="ORF">D806_0079</name>
</gene>
<keyword id="KW-0964">Secreted</keyword>
<sequence>MSEELKYELPGLERKAHECESTRPEGPGDATKPDELATTASVYGKLMASAAKLKATFAAGDREGKRIAAAIRAAAGAYQKIEEQKAAELNRQMNGSDAPPPAAEAVVPDMSGIPGPLTIPSMEYPSAAAAADEMDWEAAARIIHSGDTQALSMKYFRDQWRDYQSTLEGHGRHFANPAEGWSGAAAETCAEAQRRLSTWWADMGAECGRLAQEATTFVDAHDKLVANHPTMDDVKAFEEAEWESEWDRQYAWAIKQEKSEDALEAYANGSQIQEIRPGKPPSIGGLPAVNDGDVQATPTSTTGGPGGPGSGSGGGSGGGASGGSGGGTPEMPELPSTDPSMSPMSTNSAGEEQSSGSPSSGGSSSGGSPSGGSPSGGGAPSSGGMPEGGLPTDMPGGPDIPGLDDPSLKPASAGGGGGGGVGGGGGGGMPAAPLGPAVGADSVSPSPSSTRGGGVGVPTGTGGGAGGMMGGGMGGMGAGHGQGQGKEKKRDPKLAPDEDLYTEDRAHSEGVIGHRPRREKDSGKQQ</sequence>
<protein>
    <recommendedName>
        <fullName evidence="5">ESX-1 secretion-associated protein EspB</fullName>
    </recommendedName>
    <alternativeName>
        <fullName evidence="5">Antigen MTB48</fullName>
    </alternativeName>
</protein>
<dbReference type="EMBL" id="CP027541">
    <property type="protein sequence ID" value="AWT51074.1"/>
    <property type="molecule type" value="Genomic_DNA"/>
</dbReference>
<dbReference type="RefSeq" id="WP_003891407.1">
    <property type="nucleotide sequence ID" value="NZ_CP027541.1"/>
</dbReference>
<dbReference type="SMR" id="L8FKX3"/>
<dbReference type="PATRIC" id="fig|1214915.3.peg.84"/>
<dbReference type="HOGENOM" id="CLU_506989_0_0_11"/>
<dbReference type="Proteomes" id="UP000011200">
    <property type="component" value="Chromosome"/>
</dbReference>
<dbReference type="GO" id="GO:0005576">
    <property type="term" value="C:extracellular region"/>
    <property type="evidence" value="ECO:0007669"/>
    <property type="project" value="UniProtKB-SubCell"/>
</dbReference>
<dbReference type="InterPro" id="IPR041275">
    <property type="entry name" value="EspB_PE"/>
</dbReference>
<dbReference type="InterPro" id="IPR054056">
    <property type="entry name" value="EspB_PPE"/>
</dbReference>
<dbReference type="Pfam" id="PF18625">
    <property type="entry name" value="EspB_PE"/>
    <property type="match status" value="1"/>
</dbReference>
<dbReference type="Pfam" id="PF21856">
    <property type="entry name" value="EspB_PPE"/>
    <property type="match status" value="1"/>
</dbReference>
<evidence type="ECO:0000250" key="1">
    <source>
        <dbReference type="UniProtKB" id="P9WJD9"/>
    </source>
</evidence>
<evidence type="ECO:0000256" key="2">
    <source>
        <dbReference type="SAM" id="MobiDB-lite"/>
    </source>
</evidence>
<evidence type="ECO:0000269" key="3">
    <source>
    </source>
</evidence>
<evidence type="ECO:0000303" key="4">
    <source>
    </source>
</evidence>
<evidence type="ECO:0000305" key="5"/>
<evidence type="ECO:0000305" key="6">
    <source>
    </source>
</evidence>
<evidence type="ECO:0000312" key="7">
    <source>
        <dbReference type="EMBL" id="AWT51074.1"/>
    </source>
</evidence>
<feature type="chain" id="PRO_0000438360" description="ESX-1 secretion-associated protein EspB">
    <location>
        <begin position="1"/>
        <end position="526"/>
    </location>
</feature>
<feature type="region of interest" description="Disordered" evidence="2">
    <location>
        <begin position="1"/>
        <end position="35"/>
    </location>
</feature>
<feature type="region of interest" description="Disordered" evidence="2">
    <location>
        <begin position="91"/>
        <end position="110"/>
    </location>
</feature>
<feature type="region of interest" description="Disordered" evidence="2">
    <location>
        <begin position="271"/>
        <end position="526"/>
    </location>
</feature>
<feature type="compositionally biased region" description="Basic and acidic residues" evidence="2">
    <location>
        <begin position="1"/>
        <end position="23"/>
    </location>
</feature>
<feature type="compositionally biased region" description="Gly residues" evidence="2">
    <location>
        <begin position="303"/>
        <end position="328"/>
    </location>
</feature>
<feature type="compositionally biased region" description="Low complexity" evidence="2">
    <location>
        <begin position="335"/>
        <end position="362"/>
    </location>
</feature>
<feature type="compositionally biased region" description="Gly residues" evidence="2">
    <location>
        <begin position="363"/>
        <end position="387"/>
    </location>
</feature>
<feature type="compositionally biased region" description="Low complexity" evidence="2">
    <location>
        <begin position="393"/>
        <end position="405"/>
    </location>
</feature>
<feature type="compositionally biased region" description="Gly residues" evidence="2">
    <location>
        <begin position="413"/>
        <end position="429"/>
    </location>
</feature>
<feature type="compositionally biased region" description="Low complexity" evidence="2">
    <location>
        <begin position="430"/>
        <end position="440"/>
    </location>
</feature>
<feature type="compositionally biased region" description="Gly residues" evidence="2">
    <location>
        <begin position="451"/>
        <end position="484"/>
    </location>
</feature>
<feature type="compositionally biased region" description="Basic and acidic residues" evidence="2">
    <location>
        <begin position="485"/>
        <end position="508"/>
    </location>
</feature>